<organism>
    <name type="scientific">Pseudomonas aeruginosa (strain ATCC 15692 / DSM 22644 / CIP 104116 / JCM 14847 / LMG 12228 / 1C / PRS 101 / PAO1)</name>
    <dbReference type="NCBI Taxonomy" id="208964"/>
    <lineage>
        <taxon>Bacteria</taxon>
        <taxon>Pseudomonadati</taxon>
        <taxon>Pseudomonadota</taxon>
        <taxon>Gammaproteobacteria</taxon>
        <taxon>Pseudomonadales</taxon>
        <taxon>Pseudomonadaceae</taxon>
        <taxon>Pseudomonas</taxon>
    </lineage>
</organism>
<keyword id="KW-0002">3D-structure</keyword>
<keyword id="KW-0963">Cytoplasm</keyword>
<keyword id="KW-0210">Decarboxylase</keyword>
<keyword id="KW-0456">Lyase</keyword>
<keyword id="KW-0627">Porphyrin biosynthesis</keyword>
<keyword id="KW-1185">Reference proteome</keyword>
<gene>
    <name evidence="1" type="primary">hemE</name>
    <name type="ordered locus">PA5034</name>
</gene>
<sequence length="355" mass="38792">MTALKNDRFLRALLKQPVDVTPVWMMRQAGRYLPEYRATRAKAGDFMSLCMNPELACEVTLQPLDRYPQLDAAILFSDILTIPDAMGQGLYFETGEGPRFRKVVSSLADIEALPVPDPEQDLGYVMDAVRTIRRELNGRVPLIGFSGSPWTLATYMVEGGSSKDFRKSKAMLYDNPKAMHALLDKLAQSVTSYLNGQIHAGAQAVQIFDSWGGSLSAAAYQEFSLAYMRKIVDGLIREHDGRRVPVILFTKGGGLWLESMAEVGAEALGLDWTCDIGSARARVGERVALQGNMDPSVLYANPAAIRAEVARILAAYGKGTGHVFNLGHGITPEVDPAHAGAFFEAVHELSAQYHG</sequence>
<accession>P95458</accession>
<reference key="1">
    <citation type="journal article" date="2000" name="Nature">
        <title>Complete genome sequence of Pseudomonas aeruginosa PAO1, an opportunistic pathogen.</title>
        <authorList>
            <person name="Stover C.K."/>
            <person name="Pham X.-Q.T."/>
            <person name="Erwin A.L."/>
            <person name="Mizoguchi S.D."/>
            <person name="Warrener P."/>
            <person name="Hickey M.J."/>
            <person name="Brinkman F.S.L."/>
            <person name="Hufnagle W.O."/>
            <person name="Kowalik D.J."/>
            <person name="Lagrou M."/>
            <person name="Garber R.L."/>
            <person name="Goltry L."/>
            <person name="Tolentino E."/>
            <person name="Westbrock-Wadman S."/>
            <person name="Yuan Y."/>
            <person name="Brody L.L."/>
            <person name="Coulter S.N."/>
            <person name="Folger K.R."/>
            <person name="Kas A."/>
            <person name="Larbig K."/>
            <person name="Lim R.M."/>
            <person name="Smith K.A."/>
            <person name="Spencer D.H."/>
            <person name="Wong G.K.-S."/>
            <person name="Wu Z."/>
            <person name="Paulsen I.T."/>
            <person name="Reizer J."/>
            <person name="Saier M.H. Jr."/>
            <person name="Hancock R.E.W."/>
            <person name="Lory S."/>
            <person name="Olson M.V."/>
        </authorList>
    </citation>
    <scope>NUCLEOTIDE SEQUENCE [LARGE SCALE GENOMIC DNA]</scope>
    <source>
        <strain>ATCC 15692 / DSM 22644 / CIP 104116 / JCM 14847 / LMG 12228 / 1C / PRS 101 / PAO1</strain>
    </source>
</reference>
<reference key="2">
    <citation type="submission" date="1996-12" db="EMBL/GenBank/DDBJ databases">
        <title>Characterization of glutamate synthase from Pseudomonas aeruginosa PAO1.</title>
        <authorList>
            <person name="Lu C.D."/>
            <person name="Kwon D.-H."/>
            <person name="Walthall D.A."/>
            <person name="Abdelal A.T."/>
        </authorList>
    </citation>
    <scope>NUCLEOTIDE SEQUENCE [GENOMIC DNA] OF 1-295</scope>
    <source>
        <strain>ATCC 15692 / DSM 22644 / CIP 104116 / JCM 14847 / LMG 12228 / 1C / PRS 101 / PAO1</strain>
    </source>
</reference>
<protein>
    <recommendedName>
        <fullName evidence="1">Uroporphyrinogen decarboxylase</fullName>
        <shortName evidence="1">UPD</shortName>
        <shortName evidence="1">URO-D</shortName>
        <ecNumber evidence="1">4.1.1.37</ecNumber>
    </recommendedName>
</protein>
<dbReference type="EC" id="4.1.1.37" evidence="1"/>
<dbReference type="EMBL" id="AE004091">
    <property type="protein sequence ID" value="AAG08419.1"/>
    <property type="molecule type" value="Genomic_DNA"/>
</dbReference>
<dbReference type="EMBL" id="U81261">
    <property type="protein sequence ID" value="AAB39261.1"/>
    <property type="molecule type" value="Genomic_DNA"/>
</dbReference>
<dbReference type="PIR" id="F83017">
    <property type="entry name" value="F83017"/>
</dbReference>
<dbReference type="RefSeq" id="NP_253721.1">
    <property type="nucleotide sequence ID" value="NC_002516.2"/>
</dbReference>
<dbReference type="RefSeq" id="WP_003114569.1">
    <property type="nucleotide sequence ID" value="NZ_QZGE01000002.1"/>
</dbReference>
<dbReference type="PDB" id="4WSH">
    <property type="method" value="X-ray"/>
    <property type="resolution" value="1.95 A"/>
    <property type="chains" value="A/B=1-355"/>
</dbReference>
<dbReference type="PDBsum" id="4WSH"/>
<dbReference type="SMR" id="P95458"/>
<dbReference type="FunCoup" id="P95458">
    <property type="interactions" value="697"/>
</dbReference>
<dbReference type="STRING" id="208964.PA5034"/>
<dbReference type="PaxDb" id="208964-PA5034"/>
<dbReference type="DNASU" id="881202"/>
<dbReference type="GeneID" id="881202"/>
<dbReference type="KEGG" id="pae:PA5034"/>
<dbReference type="PATRIC" id="fig|208964.12.peg.5277"/>
<dbReference type="PseudoCAP" id="PA5034"/>
<dbReference type="HOGENOM" id="CLU_040933_0_0_6"/>
<dbReference type="InParanoid" id="P95458"/>
<dbReference type="OrthoDB" id="9806656at2"/>
<dbReference type="PhylomeDB" id="P95458"/>
<dbReference type="BioCyc" id="PAER208964:G1FZ6-5150-MONOMER"/>
<dbReference type="UniPathway" id="UPA00251">
    <property type="reaction ID" value="UER00321"/>
</dbReference>
<dbReference type="EvolutionaryTrace" id="P95458"/>
<dbReference type="Proteomes" id="UP000002438">
    <property type="component" value="Chromosome"/>
</dbReference>
<dbReference type="GO" id="GO:0005829">
    <property type="term" value="C:cytosol"/>
    <property type="evidence" value="ECO:0000318"/>
    <property type="project" value="GO_Central"/>
</dbReference>
<dbReference type="GO" id="GO:0004853">
    <property type="term" value="F:uroporphyrinogen decarboxylase activity"/>
    <property type="evidence" value="ECO:0000318"/>
    <property type="project" value="GO_Central"/>
</dbReference>
<dbReference type="GO" id="GO:0006783">
    <property type="term" value="P:heme biosynthetic process"/>
    <property type="evidence" value="ECO:0000318"/>
    <property type="project" value="GO_Central"/>
</dbReference>
<dbReference type="GO" id="GO:0019353">
    <property type="term" value="P:protoporphyrinogen IX biosynthetic process from glutamate"/>
    <property type="evidence" value="ECO:0000318"/>
    <property type="project" value="GO_Central"/>
</dbReference>
<dbReference type="CDD" id="cd00717">
    <property type="entry name" value="URO-D"/>
    <property type="match status" value="1"/>
</dbReference>
<dbReference type="FunFam" id="3.20.20.210:FF:000001">
    <property type="entry name" value="Uroporphyrinogen decarboxylase"/>
    <property type="match status" value="1"/>
</dbReference>
<dbReference type="Gene3D" id="3.20.20.210">
    <property type="match status" value="1"/>
</dbReference>
<dbReference type="HAMAP" id="MF_00218">
    <property type="entry name" value="URO_D"/>
    <property type="match status" value="1"/>
</dbReference>
<dbReference type="InterPro" id="IPR038071">
    <property type="entry name" value="UROD/MetE-like_sf"/>
</dbReference>
<dbReference type="InterPro" id="IPR006361">
    <property type="entry name" value="Uroporphyrinogen_deCO2ase_HemE"/>
</dbReference>
<dbReference type="InterPro" id="IPR000257">
    <property type="entry name" value="Uroporphyrinogen_deCOase"/>
</dbReference>
<dbReference type="NCBIfam" id="TIGR01464">
    <property type="entry name" value="hemE"/>
    <property type="match status" value="1"/>
</dbReference>
<dbReference type="PANTHER" id="PTHR21091">
    <property type="entry name" value="METHYLTETRAHYDROFOLATE:HOMOCYSTEINE METHYLTRANSFERASE RELATED"/>
    <property type="match status" value="1"/>
</dbReference>
<dbReference type="PANTHER" id="PTHR21091:SF169">
    <property type="entry name" value="UROPORPHYRINOGEN DECARBOXYLASE"/>
    <property type="match status" value="1"/>
</dbReference>
<dbReference type="Pfam" id="PF01208">
    <property type="entry name" value="URO-D"/>
    <property type="match status" value="1"/>
</dbReference>
<dbReference type="SUPFAM" id="SSF51726">
    <property type="entry name" value="UROD/MetE-like"/>
    <property type="match status" value="1"/>
</dbReference>
<dbReference type="PROSITE" id="PS00906">
    <property type="entry name" value="UROD_1"/>
    <property type="match status" value="1"/>
</dbReference>
<dbReference type="PROSITE" id="PS00907">
    <property type="entry name" value="UROD_2"/>
    <property type="match status" value="1"/>
</dbReference>
<proteinExistence type="evidence at protein level"/>
<evidence type="ECO:0000255" key="1">
    <source>
        <dbReference type="HAMAP-Rule" id="MF_00218"/>
    </source>
</evidence>
<evidence type="ECO:0007829" key="2">
    <source>
        <dbReference type="PDB" id="4WSH"/>
    </source>
</evidence>
<feature type="chain" id="PRO_0000187626" description="Uroporphyrinogen decarboxylase">
    <location>
        <begin position="1"/>
        <end position="355"/>
    </location>
</feature>
<feature type="binding site" evidence="1">
    <location>
        <begin position="27"/>
        <end position="31"/>
    </location>
    <ligand>
        <name>substrate</name>
    </ligand>
</feature>
<feature type="binding site" evidence="1">
    <location>
        <position position="46"/>
    </location>
    <ligand>
        <name>substrate</name>
    </ligand>
</feature>
<feature type="binding site" evidence="1">
    <location>
        <position position="78"/>
    </location>
    <ligand>
        <name>substrate</name>
    </ligand>
</feature>
<feature type="binding site" evidence="1">
    <location>
        <position position="155"/>
    </location>
    <ligand>
        <name>substrate</name>
    </ligand>
</feature>
<feature type="binding site" evidence="1">
    <location>
        <position position="210"/>
    </location>
    <ligand>
        <name>substrate</name>
    </ligand>
</feature>
<feature type="binding site" evidence="1">
    <location>
        <position position="328"/>
    </location>
    <ligand>
        <name>substrate</name>
    </ligand>
</feature>
<feature type="site" description="Transition state stabilizer" evidence="1">
    <location>
        <position position="78"/>
    </location>
</feature>
<feature type="helix" evidence="2">
    <location>
        <begin position="8"/>
        <end position="13"/>
    </location>
</feature>
<feature type="helix" evidence="2">
    <location>
        <begin position="34"/>
        <end position="43"/>
    </location>
</feature>
<feature type="helix" evidence="2">
    <location>
        <begin position="46"/>
        <end position="50"/>
    </location>
</feature>
<feature type="helix" evidence="2">
    <location>
        <begin position="53"/>
        <end position="66"/>
    </location>
</feature>
<feature type="helix" evidence="2">
    <location>
        <begin position="81"/>
        <end position="85"/>
    </location>
</feature>
<feature type="strand" evidence="2">
    <location>
        <begin position="90"/>
        <end position="92"/>
    </location>
</feature>
<feature type="strand" evidence="2">
    <location>
        <begin position="98"/>
        <end position="102"/>
    </location>
</feature>
<feature type="helix" evidence="2">
    <location>
        <begin position="107"/>
        <end position="112"/>
    </location>
</feature>
<feature type="helix" evidence="2">
    <location>
        <begin position="118"/>
        <end position="121"/>
    </location>
</feature>
<feature type="helix" evidence="2">
    <location>
        <begin position="123"/>
        <end position="136"/>
    </location>
</feature>
<feature type="strand" evidence="2">
    <location>
        <begin position="142"/>
        <end position="147"/>
    </location>
</feature>
<feature type="helix" evidence="2">
    <location>
        <begin position="149"/>
        <end position="158"/>
    </location>
</feature>
<feature type="helix" evidence="2">
    <location>
        <begin position="166"/>
        <end position="174"/>
    </location>
</feature>
<feature type="helix" evidence="2">
    <location>
        <begin position="176"/>
        <end position="200"/>
    </location>
</feature>
<feature type="strand" evidence="2">
    <location>
        <begin position="203"/>
        <end position="209"/>
    </location>
</feature>
<feature type="helix" evidence="2">
    <location>
        <begin position="212"/>
        <end position="214"/>
    </location>
</feature>
<feature type="helix" evidence="2">
    <location>
        <begin position="217"/>
        <end position="223"/>
    </location>
</feature>
<feature type="helix" evidence="2">
    <location>
        <begin position="225"/>
        <end position="234"/>
    </location>
</feature>
<feature type="strand" evidence="2">
    <location>
        <begin position="246"/>
        <end position="250"/>
    </location>
</feature>
<feature type="helix" evidence="2">
    <location>
        <begin position="254"/>
        <end position="256"/>
    </location>
</feature>
<feature type="helix" evidence="2">
    <location>
        <begin position="257"/>
        <end position="260"/>
    </location>
</feature>
<feature type="strand" evidence="2">
    <location>
        <begin position="266"/>
        <end position="269"/>
    </location>
</feature>
<feature type="helix" evidence="2">
    <location>
        <begin position="276"/>
        <end position="283"/>
    </location>
</feature>
<feature type="turn" evidence="2">
    <location>
        <begin position="284"/>
        <end position="286"/>
    </location>
</feature>
<feature type="strand" evidence="2">
    <location>
        <begin position="288"/>
        <end position="290"/>
    </location>
</feature>
<feature type="helix" evidence="2">
    <location>
        <begin position="295"/>
        <end position="299"/>
    </location>
</feature>
<feature type="helix" evidence="2">
    <location>
        <begin position="302"/>
        <end position="316"/>
    </location>
</feature>
<feature type="strand" evidence="2">
    <location>
        <begin position="318"/>
        <end position="320"/>
    </location>
</feature>
<feature type="strand" evidence="2">
    <location>
        <begin position="322"/>
        <end position="324"/>
    </location>
</feature>
<feature type="strand" evidence="2">
    <location>
        <begin position="326"/>
        <end position="328"/>
    </location>
</feature>
<feature type="helix" evidence="2">
    <location>
        <begin position="336"/>
        <end position="350"/>
    </location>
</feature>
<feature type="helix" evidence="2">
    <location>
        <begin position="351"/>
        <end position="353"/>
    </location>
</feature>
<comment type="function">
    <text evidence="1">Catalyzes the decarboxylation of four acetate groups of uroporphyrinogen-III to yield coproporphyrinogen-III.</text>
</comment>
<comment type="catalytic activity">
    <reaction evidence="1">
        <text>uroporphyrinogen III + 4 H(+) = coproporphyrinogen III + 4 CO2</text>
        <dbReference type="Rhea" id="RHEA:19865"/>
        <dbReference type="ChEBI" id="CHEBI:15378"/>
        <dbReference type="ChEBI" id="CHEBI:16526"/>
        <dbReference type="ChEBI" id="CHEBI:57308"/>
        <dbReference type="ChEBI" id="CHEBI:57309"/>
        <dbReference type="EC" id="4.1.1.37"/>
    </reaction>
</comment>
<comment type="pathway">
    <text evidence="1">Porphyrin-containing compound metabolism; protoporphyrin-IX biosynthesis; coproporphyrinogen-III from 5-aminolevulinate: step 4/4.</text>
</comment>
<comment type="subunit">
    <text evidence="1">Homodimer.</text>
</comment>
<comment type="subcellular location">
    <subcellularLocation>
        <location evidence="1">Cytoplasm</location>
    </subcellularLocation>
</comment>
<comment type="similarity">
    <text evidence="1">Belongs to the uroporphyrinogen decarboxylase family.</text>
</comment>
<name>DCUP_PSEAE</name>